<name>UL24_EHV1B</name>
<proteinExistence type="evidence at transcript level"/>
<evidence type="ECO:0000250" key="1"/>
<evidence type="ECO:0000305" key="2"/>
<gene>
    <name type="primary">UL24</name>
    <name type="ordered locus">37</name>
</gene>
<organismHost>
    <name type="scientific">Equus caballus</name>
    <name type="common">Horse</name>
    <dbReference type="NCBI Taxonomy" id="9796"/>
</organismHost>
<feature type="chain" id="PRO_0000115980" description="Protein UL24 homolog">
    <location>
        <begin position="1"/>
        <end position="272"/>
    </location>
</feature>
<protein>
    <recommendedName>
        <fullName>Protein UL24 homolog</fullName>
    </recommendedName>
</protein>
<reference key="1">
    <citation type="journal article" date="1992" name="Virology">
        <title>The DNA sequence of equine herpesvirus-1.</title>
        <authorList>
            <person name="Telford E.A.R."/>
            <person name="Watson M.S."/>
            <person name="McBride K."/>
            <person name="Davison A.J."/>
        </authorList>
    </citation>
    <scope>NUCLEOTIDE SEQUENCE [LARGE SCALE GENOMIC DNA]</scope>
</reference>
<accession>P28927</accession>
<accession>Q6DLH3</accession>
<keyword id="KW-1035">Host cytoplasm</keyword>
<keyword id="KW-1040">Host Golgi apparatus</keyword>
<keyword id="KW-1048">Host nucleus</keyword>
<keyword id="KW-0426">Late protein</keyword>
<keyword id="KW-1185">Reference proteome</keyword>
<keyword id="KW-0946">Virion</keyword>
<sequence>MKRRQRLTARSRLRAGIRCHNRFYNAMVQDLASAKRNGVYGERLAPLFSELVPAETLKTALGVSLAFEVNLGQRRPDCVCTVQFGKGSDAKGVCILIELKTCRFSKNMNTASKNLQRKGGMRQLHDSCRLLARTLPPGSGEIVLAPVLVFVAQRGMRVLRVTRLSPQVVYSNAAVLSCTISRLAEYAPPVSAKSTRRRCVAKGTKAKAFSTKAAAEPVPSITPAQPSAAAAVVSLFPAAVPANTTNAAAVHQPVAVSHVNPLAWAASLFSPK</sequence>
<dbReference type="EMBL" id="AY665713">
    <property type="protein sequence ID" value="AAT67295.1"/>
    <property type="molecule type" value="Genomic_DNA"/>
</dbReference>
<dbReference type="PIR" id="C36799">
    <property type="entry name" value="WZBED1"/>
</dbReference>
<dbReference type="KEGG" id="vg:1487532"/>
<dbReference type="Proteomes" id="UP000001189">
    <property type="component" value="Segment"/>
</dbReference>
<dbReference type="GO" id="GO:0044177">
    <property type="term" value="C:host cell Golgi apparatus"/>
    <property type="evidence" value="ECO:0007669"/>
    <property type="project" value="UniProtKB-SubCell"/>
</dbReference>
<dbReference type="GO" id="GO:0044196">
    <property type="term" value="C:host cell nucleolus"/>
    <property type="evidence" value="ECO:0007669"/>
    <property type="project" value="UniProtKB-SubCell"/>
</dbReference>
<dbReference type="GO" id="GO:0044423">
    <property type="term" value="C:virion component"/>
    <property type="evidence" value="ECO:0007669"/>
    <property type="project" value="UniProtKB-KW"/>
</dbReference>
<dbReference type="InterPro" id="IPR002580">
    <property type="entry name" value="Herpes_UL24"/>
</dbReference>
<dbReference type="Pfam" id="PF01646">
    <property type="entry name" value="Herpes_UL24"/>
    <property type="match status" value="1"/>
</dbReference>
<organism>
    <name type="scientific">Equine herpesvirus 1 (strain Ab4p)</name>
    <name type="common">EHV-1</name>
    <name type="synonym">Equine abortion virus</name>
    <dbReference type="NCBI Taxonomy" id="31520"/>
    <lineage>
        <taxon>Viruses</taxon>
        <taxon>Duplodnaviria</taxon>
        <taxon>Heunggongvirae</taxon>
        <taxon>Peploviricota</taxon>
        <taxon>Herviviricetes</taxon>
        <taxon>Herpesvirales</taxon>
        <taxon>Orthoherpesviridae</taxon>
        <taxon>Alphaherpesvirinae</taxon>
        <taxon>Varicellovirus</taxon>
        <taxon>Varicellovirus equidalpha1</taxon>
        <taxon>Equid alphaherpesvirus 1</taxon>
    </lineage>
</organism>
<comment type="function">
    <text evidence="1">May participate in nuclear egress of viral particles. Plays a role in the dispersal of several host nucleolar proteins including NCL/nucleolin and NPM1. Since deletion of host NCL/nucleolin negatively impact on nuclear egress, UL24 supposedly acts on this process through its effect on host nucleoli (By similarity).</text>
</comment>
<comment type="subcellular location">
    <subcellularLocation>
        <location evidence="1">Virion</location>
    </subcellularLocation>
    <subcellularLocation>
        <location evidence="1">Host cytoplasm</location>
    </subcellularLocation>
    <subcellularLocation>
        <location evidence="1">Host nucleus</location>
        <location evidence="1">Host nucleolus</location>
    </subcellularLocation>
    <subcellularLocation>
        <location evidence="1">Host Golgi apparatus</location>
    </subcellularLocation>
</comment>
<comment type="induction">
    <text>Expressed late in the infection cycle.</text>
</comment>
<comment type="similarity">
    <text evidence="2">Belongs to the herpesviridae UL24 family.</text>
</comment>